<keyword id="KW-0012">Acyltransferase</keyword>
<keyword id="KW-0133">Cell shape</keyword>
<keyword id="KW-0961">Cell wall biogenesis/degradation</keyword>
<keyword id="KW-0963">Cytoplasm</keyword>
<keyword id="KW-0460">Magnesium</keyword>
<keyword id="KW-0479">Metal-binding</keyword>
<keyword id="KW-0511">Multifunctional enzyme</keyword>
<keyword id="KW-0548">Nucleotidyltransferase</keyword>
<keyword id="KW-0573">Peptidoglycan synthesis</keyword>
<keyword id="KW-0677">Repeat</keyword>
<keyword id="KW-0808">Transferase</keyword>
<comment type="function">
    <text evidence="1">Catalyzes the last two sequential reactions in the de novo biosynthetic pathway for UDP-N-acetylglucosamine (UDP-GlcNAc). The C-terminal domain catalyzes the transfer of acetyl group from acetyl coenzyme A to glucosamine-1-phosphate (GlcN-1-P) to produce N-acetylglucosamine-1-phosphate (GlcNAc-1-P), which is converted into UDP-GlcNAc by the transfer of uridine 5-monophosphate (from uridine 5-triphosphate), a reaction catalyzed by the N-terminal domain.</text>
</comment>
<comment type="catalytic activity">
    <reaction evidence="1">
        <text>alpha-D-glucosamine 1-phosphate + acetyl-CoA = N-acetyl-alpha-D-glucosamine 1-phosphate + CoA + H(+)</text>
        <dbReference type="Rhea" id="RHEA:13725"/>
        <dbReference type="ChEBI" id="CHEBI:15378"/>
        <dbReference type="ChEBI" id="CHEBI:57287"/>
        <dbReference type="ChEBI" id="CHEBI:57288"/>
        <dbReference type="ChEBI" id="CHEBI:57776"/>
        <dbReference type="ChEBI" id="CHEBI:58516"/>
        <dbReference type="EC" id="2.3.1.157"/>
    </reaction>
</comment>
<comment type="catalytic activity">
    <reaction evidence="1">
        <text>N-acetyl-alpha-D-glucosamine 1-phosphate + UTP + H(+) = UDP-N-acetyl-alpha-D-glucosamine + diphosphate</text>
        <dbReference type="Rhea" id="RHEA:13509"/>
        <dbReference type="ChEBI" id="CHEBI:15378"/>
        <dbReference type="ChEBI" id="CHEBI:33019"/>
        <dbReference type="ChEBI" id="CHEBI:46398"/>
        <dbReference type="ChEBI" id="CHEBI:57705"/>
        <dbReference type="ChEBI" id="CHEBI:57776"/>
        <dbReference type="EC" id="2.7.7.23"/>
    </reaction>
</comment>
<comment type="cofactor">
    <cofactor evidence="1">
        <name>Mg(2+)</name>
        <dbReference type="ChEBI" id="CHEBI:18420"/>
    </cofactor>
    <text evidence="1">Binds 1 Mg(2+) ion per subunit.</text>
</comment>
<comment type="pathway">
    <text evidence="1">Nucleotide-sugar biosynthesis; UDP-N-acetyl-alpha-D-glucosamine biosynthesis; N-acetyl-alpha-D-glucosamine 1-phosphate from alpha-D-glucosamine 6-phosphate (route II): step 2/2.</text>
</comment>
<comment type="pathway">
    <text evidence="1">Nucleotide-sugar biosynthesis; UDP-N-acetyl-alpha-D-glucosamine biosynthesis; UDP-N-acetyl-alpha-D-glucosamine from N-acetyl-alpha-D-glucosamine 1-phosphate: step 1/1.</text>
</comment>
<comment type="pathway">
    <text evidence="1">Bacterial outer membrane biogenesis; LPS lipid A biosynthesis.</text>
</comment>
<comment type="subunit">
    <text evidence="1">Homotrimer.</text>
</comment>
<comment type="subcellular location">
    <subcellularLocation>
        <location evidence="1">Cytoplasm</location>
    </subcellularLocation>
</comment>
<comment type="similarity">
    <text evidence="1">In the N-terminal section; belongs to the N-acetylglucosamine-1-phosphate uridyltransferase family.</text>
</comment>
<comment type="similarity">
    <text evidence="1">In the C-terminal section; belongs to the transferase hexapeptide repeat family.</text>
</comment>
<feature type="chain" id="PRO_0000233837" description="Bifunctional protein GlmU">
    <location>
        <begin position="1"/>
        <end position="456"/>
    </location>
</feature>
<feature type="region of interest" description="Pyrophosphorylase" evidence="1">
    <location>
        <begin position="1"/>
        <end position="229"/>
    </location>
</feature>
<feature type="region of interest" description="Linker" evidence="1">
    <location>
        <begin position="230"/>
        <end position="250"/>
    </location>
</feature>
<feature type="region of interest" description="N-acetyltransferase" evidence="1">
    <location>
        <begin position="251"/>
        <end position="456"/>
    </location>
</feature>
<feature type="active site" description="Proton acceptor" evidence="1">
    <location>
        <position position="363"/>
    </location>
</feature>
<feature type="binding site" evidence="1">
    <location>
        <begin position="11"/>
        <end position="14"/>
    </location>
    <ligand>
        <name>UDP-N-acetyl-alpha-D-glucosamine</name>
        <dbReference type="ChEBI" id="CHEBI:57705"/>
    </ligand>
</feature>
<feature type="binding site" evidence="1">
    <location>
        <position position="25"/>
    </location>
    <ligand>
        <name>UDP-N-acetyl-alpha-D-glucosamine</name>
        <dbReference type="ChEBI" id="CHEBI:57705"/>
    </ligand>
</feature>
<feature type="binding site" evidence="1">
    <location>
        <position position="76"/>
    </location>
    <ligand>
        <name>UDP-N-acetyl-alpha-D-glucosamine</name>
        <dbReference type="ChEBI" id="CHEBI:57705"/>
    </ligand>
</feature>
<feature type="binding site" evidence="1">
    <location>
        <begin position="81"/>
        <end position="82"/>
    </location>
    <ligand>
        <name>UDP-N-acetyl-alpha-D-glucosamine</name>
        <dbReference type="ChEBI" id="CHEBI:57705"/>
    </ligand>
</feature>
<feature type="binding site" evidence="1">
    <location>
        <begin position="103"/>
        <end position="105"/>
    </location>
    <ligand>
        <name>UDP-N-acetyl-alpha-D-glucosamine</name>
        <dbReference type="ChEBI" id="CHEBI:57705"/>
    </ligand>
</feature>
<feature type="binding site" evidence="1">
    <location>
        <position position="105"/>
    </location>
    <ligand>
        <name>Mg(2+)</name>
        <dbReference type="ChEBI" id="CHEBI:18420"/>
    </ligand>
</feature>
<feature type="binding site" evidence="1">
    <location>
        <position position="140"/>
    </location>
    <ligand>
        <name>UDP-N-acetyl-alpha-D-glucosamine</name>
        <dbReference type="ChEBI" id="CHEBI:57705"/>
    </ligand>
</feature>
<feature type="binding site" evidence="1">
    <location>
        <position position="154"/>
    </location>
    <ligand>
        <name>UDP-N-acetyl-alpha-D-glucosamine</name>
        <dbReference type="ChEBI" id="CHEBI:57705"/>
    </ligand>
</feature>
<feature type="binding site" evidence="1">
    <location>
        <position position="169"/>
    </location>
    <ligand>
        <name>UDP-N-acetyl-alpha-D-glucosamine</name>
        <dbReference type="ChEBI" id="CHEBI:57705"/>
    </ligand>
</feature>
<feature type="binding site" evidence="1">
    <location>
        <position position="227"/>
    </location>
    <ligand>
        <name>Mg(2+)</name>
        <dbReference type="ChEBI" id="CHEBI:18420"/>
    </ligand>
</feature>
<feature type="binding site" evidence="1">
    <location>
        <position position="227"/>
    </location>
    <ligand>
        <name>UDP-N-acetyl-alpha-D-glucosamine</name>
        <dbReference type="ChEBI" id="CHEBI:57705"/>
    </ligand>
</feature>
<feature type="binding site" evidence="1">
    <location>
        <position position="333"/>
    </location>
    <ligand>
        <name>UDP-N-acetyl-alpha-D-glucosamine</name>
        <dbReference type="ChEBI" id="CHEBI:57705"/>
    </ligand>
</feature>
<feature type="binding site" evidence="1">
    <location>
        <position position="351"/>
    </location>
    <ligand>
        <name>UDP-N-acetyl-alpha-D-glucosamine</name>
        <dbReference type="ChEBI" id="CHEBI:57705"/>
    </ligand>
</feature>
<feature type="binding site" evidence="1">
    <location>
        <position position="366"/>
    </location>
    <ligand>
        <name>UDP-N-acetyl-alpha-D-glucosamine</name>
        <dbReference type="ChEBI" id="CHEBI:57705"/>
    </ligand>
</feature>
<feature type="binding site" evidence="1">
    <location>
        <position position="377"/>
    </location>
    <ligand>
        <name>UDP-N-acetyl-alpha-D-glucosamine</name>
        <dbReference type="ChEBI" id="CHEBI:57705"/>
    </ligand>
</feature>
<feature type="binding site" evidence="1">
    <location>
        <position position="380"/>
    </location>
    <ligand>
        <name>acetyl-CoA</name>
        <dbReference type="ChEBI" id="CHEBI:57288"/>
    </ligand>
</feature>
<feature type="binding site" evidence="1">
    <location>
        <begin position="386"/>
        <end position="387"/>
    </location>
    <ligand>
        <name>acetyl-CoA</name>
        <dbReference type="ChEBI" id="CHEBI:57288"/>
    </ligand>
</feature>
<feature type="binding site" evidence="1">
    <location>
        <position position="405"/>
    </location>
    <ligand>
        <name>acetyl-CoA</name>
        <dbReference type="ChEBI" id="CHEBI:57288"/>
    </ligand>
</feature>
<feature type="binding site" evidence="1">
    <location>
        <position position="423"/>
    </location>
    <ligand>
        <name>acetyl-CoA</name>
        <dbReference type="ChEBI" id="CHEBI:57288"/>
    </ligand>
</feature>
<feature type="binding site" evidence="1">
    <location>
        <position position="440"/>
    </location>
    <ligand>
        <name>acetyl-CoA</name>
        <dbReference type="ChEBI" id="CHEBI:57288"/>
    </ligand>
</feature>
<accession>Q8Z2Q3</accession>
<accession>Q7C6I6</accession>
<sequence>MLNSAMSVVILAAGKGTRMYSDIPKVLHTLAGKPMVQHVIDAATKLGAAQVHLVYGHGGELLKQTLKDDKLNWVLQAEQLGTGHAMQQAAPFFSDDEDILMLYGDVPLISVETLQRLRDAKPQGGIGLLTVKLDDPSGYGRITRENGKVTGIVEHKDATDEQRQIQEINTGILIANGADLKRWLSKLTNNNAQGEYYITDIIALAYQEGREIAAVHPARISETDGVNNRLQLSRLERIYQAEQAEKLLLSGVMLRDPARFDLRGTLYCGMDVEIDANVIIEGYVTLGHRVKIGAGCIIKNSVIGDDCEISPYSVVEDAHLEAACTIGPFARLRPGAELLAGAHVGNFVEMKKARLGKGSKAGHLTYLGDAEIGDNVNIGAGTITCNYDGANKFKTVIGDDVFVGSDTQLVAPVTVGKGATIAAGTTVTRNVADNELVLSRVPQVHKQGWQRPVKKK</sequence>
<name>GLMU_SALTI</name>
<gene>
    <name evidence="1" type="primary">glmU</name>
    <name type="ordered locus">STY3916</name>
    <name type="ordered locus">t3657</name>
</gene>
<dbReference type="EC" id="2.7.7.23" evidence="1"/>
<dbReference type="EC" id="2.3.1.157" evidence="1"/>
<dbReference type="EMBL" id="AL513382">
    <property type="protein sequence ID" value="CAD03133.1"/>
    <property type="molecule type" value="Genomic_DNA"/>
</dbReference>
<dbReference type="EMBL" id="AE014613">
    <property type="protein sequence ID" value="AAO71154.1"/>
    <property type="molecule type" value="Genomic_DNA"/>
</dbReference>
<dbReference type="RefSeq" id="NP_458081.1">
    <property type="nucleotide sequence ID" value="NC_003198.1"/>
</dbReference>
<dbReference type="RefSeq" id="WP_000934853.1">
    <property type="nucleotide sequence ID" value="NZ_WSUR01000023.1"/>
</dbReference>
<dbReference type="SMR" id="Q8Z2Q3"/>
<dbReference type="STRING" id="220341.gene:17587776"/>
<dbReference type="KEGG" id="stt:t3657"/>
<dbReference type="KEGG" id="sty:STY3916"/>
<dbReference type="PATRIC" id="fig|220341.7.peg.3996"/>
<dbReference type="eggNOG" id="COG1207">
    <property type="taxonomic scope" value="Bacteria"/>
</dbReference>
<dbReference type="HOGENOM" id="CLU_029499_15_2_6"/>
<dbReference type="OMA" id="TAIVEHK"/>
<dbReference type="OrthoDB" id="9775031at2"/>
<dbReference type="UniPathway" id="UPA00113">
    <property type="reaction ID" value="UER00532"/>
</dbReference>
<dbReference type="UniPathway" id="UPA00113">
    <property type="reaction ID" value="UER00533"/>
</dbReference>
<dbReference type="UniPathway" id="UPA00973"/>
<dbReference type="Proteomes" id="UP000000541">
    <property type="component" value="Chromosome"/>
</dbReference>
<dbReference type="Proteomes" id="UP000002670">
    <property type="component" value="Chromosome"/>
</dbReference>
<dbReference type="GO" id="GO:0005737">
    <property type="term" value="C:cytoplasm"/>
    <property type="evidence" value="ECO:0007669"/>
    <property type="project" value="UniProtKB-SubCell"/>
</dbReference>
<dbReference type="GO" id="GO:0016020">
    <property type="term" value="C:membrane"/>
    <property type="evidence" value="ECO:0007669"/>
    <property type="project" value="GOC"/>
</dbReference>
<dbReference type="GO" id="GO:0019134">
    <property type="term" value="F:glucosamine-1-phosphate N-acetyltransferase activity"/>
    <property type="evidence" value="ECO:0007669"/>
    <property type="project" value="UniProtKB-UniRule"/>
</dbReference>
<dbReference type="GO" id="GO:0000287">
    <property type="term" value="F:magnesium ion binding"/>
    <property type="evidence" value="ECO:0007669"/>
    <property type="project" value="UniProtKB-UniRule"/>
</dbReference>
<dbReference type="GO" id="GO:0003977">
    <property type="term" value="F:UDP-N-acetylglucosamine diphosphorylase activity"/>
    <property type="evidence" value="ECO:0007669"/>
    <property type="project" value="UniProtKB-UniRule"/>
</dbReference>
<dbReference type="GO" id="GO:0000902">
    <property type="term" value="P:cell morphogenesis"/>
    <property type="evidence" value="ECO:0007669"/>
    <property type="project" value="UniProtKB-UniRule"/>
</dbReference>
<dbReference type="GO" id="GO:0071555">
    <property type="term" value="P:cell wall organization"/>
    <property type="evidence" value="ECO:0007669"/>
    <property type="project" value="UniProtKB-KW"/>
</dbReference>
<dbReference type="GO" id="GO:0009245">
    <property type="term" value="P:lipid A biosynthetic process"/>
    <property type="evidence" value="ECO:0007669"/>
    <property type="project" value="UniProtKB-UniRule"/>
</dbReference>
<dbReference type="GO" id="GO:0009252">
    <property type="term" value="P:peptidoglycan biosynthetic process"/>
    <property type="evidence" value="ECO:0007669"/>
    <property type="project" value="UniProtKB-UniRule"/>
</dbReference>
<dbReference type="GO" id="GO:0008360">
    <property type="term" value="P:regulation of cell shape"/>
    <property type="evidence" value="ECO:0007669"/>
    <property type="project" value="UniProtKB-KW"/>
</dbReference>
<dbReference type="GO" id="GO:0006048">
    <property type="term" value="P:UDP-N-acetylglucosamine biosynthetic process"/>
    <property type="evidence" value="ECO:0007669"/>
    <property type="project" value="UniProtKB-UniPathway"/>
</dbReference>
<dbReference type="CDD" id="cd02540">
    <property type="entry name" value="GT2_GlmU_N_bac"/>
    <property type="match status" value="1"/>
</dbReference>
<dbReference type="CDD" id="cd03353">
    <property type="entry name" value="LbH_GlmU_C"/>
    <property type="match status" value="1"/>
</dbReference>
<dbReference type="FunFam" id="2.160.10.10:FF:000011">
    <property type="entry name" value="Bifunctional protein GlmU"/>
    <property type="match status" value="1"/>
</dbReference>
<dbReference type="FunFam" id="3.90.550.10:FF:000006">
    <property type="entry name" value="Bifunctional protein GlmU"/>
    <property type="match status" value="1"/>
</dbReference>
<dbReference type="Gene3D" id="2.160.10.10">
    <property type="entry name" value="Hexapeptide repeat proteins"/>
    <property type="match status" value="1"/>
</dbReference>
<dbReference type="Gene3D" id="3.90.550.10">
    <property type="entry name" value="Spore Coat Polysaccharide Biosynthesis Protein SpsA, Chain A"/>
    <property type="match status" value="1"/>
</dbReference>
<dbReference type="HAMAP" id="MF_01631">
    <property type="entry name" value="GlmU"/>
    <property type="match status" value="1"/>
</dbReference>
<dbReference type="InterPro" id="IPR005882">
    <property type="entry name" value="Bifunctional_GlmU"/>
</dbReference>
<dbReference type="InterPro" id="IPR050065">
    <property type="entry name" value="GlmU-like"/>
</dbReference>
<dbReference type="InterPro" id="IPR038009">
    <property type="entry name" value="GlmU_C_LbH"/>
</dbReference>
<dbReference type="InterPro" id="IPR001451">
    <property type="entry name" value="Hexapep"/>
</dbReference>
<dbReference type="InterPro" id="IPR018357">
    <property type="entry name" value="Hexapep_transf_CS"/>
</dbReference>
<dbReference type="InterPro" id="IPR025877">
    <property type="entry name" value="MobA-like_NTP_Trfase"/>
</dbReference>
<dbReference type="InterPro" id="IPR029044">
    <property type="entry name" value="Nucleotide-diphossugar_trans"/>
</dbReference>
<dbReference type="InterPro" id="IPR011004">
    <property type="entry name" value="Trimer_LpxA-like_sf"/>
</dbReference>
<dbReference type="NCBIfam" id="TIGR01173">
    <property type="entry name" value="glmU"/>
    <property type="match status" value="1"/>
</dbReference>
<dbReference type="NCBIfam" id="NF006986">
    <property type="entry name" value="PRK09451.1"/>
    <property type="match status" value="1"/>
</dbReference>
<dbReference type="PANTHER" id="PTHR43584:SF3">
    <property type="entry name" value="BIFUNCTIONAL PROTEIN GLMU"/>
    <property type="match status" value="1"/>
</dbReference>
<dbReference type="PANTHER" id="PTHR43584">
    <property type="entry name" value="NUCLEOTIDYL TRANSFERASE"/>
    <property type="match status" value="1"/>
</dbReference>
<dbReference type="Pfam" id="PF00132">
    <property type="entry name" value="Hexapep"/>
    <property type="match status" value="1"/>
</dbReference>
<dbReference type="Pfam" id="PF12804">
    <property type="entry name" value="NTP_transf_3"/>
    <property type="match status" value="1"/>
</dbReference>
<dbReference type="SUPFAM" id="SSF53448">
    <property type="entry name" value="Nucleotide-diphospho-sugar transferases"/>
    <property type="match status" value="1"/>
</dbReference>
<dbReference type="SUPFAM" id="SSF51161">
    <property type="entry name" value="Trimeric LpxA-like enzymes"/>
    <property type="match status" value="1"/>
</dbReference>
<dbReference type="PROSITE" id="PS00101">
    <property type="entry name" value="HEXAPEP_TRANSFERASES"/>
    <property type="match status" value="1"/>
</dbReference>
<evidence type="ECO:0000255" key="1">
    <source>
        <dbReference type="HAMAP-Rule" id="MF_01631"/>
    </source>
</evidence>
<reference key="1">
    <citation type="journal article" date="2001" name="Nature">
        <title>Complete genome sequence of a multiple drug resistant Salmonella enterica serovar Typhi CT18.</title>
        <authorList>
            <person name="Parkhill J."/>
            <person name="Dougan G."/>
            <person name="James K.D."/>
            <person name="Thomson N.R."/>
            <person name="Pickard D."/>
            <person name="Wain J."/>
            <person name="Churcher C.M."/>
            <person name="Mungall K.L."/>
            <person name="Bentley S.D."/>
            <person name="Holden M.T.G."/>
            <person name="Sebaihia M."/>
            <person name="Baker S."/>
            <person name="Basham D."/>
            <person name="Brooks K."/>
            <person name="Chillingworth T."/>
            <person name="Connerton P."/>
            <person name="Cronin A."/>
            <person name="Davis P."/>
            <person name="Davies R.M."/>
            <person name="Dowd L."/>
            <person name="White N."/>
            <person name="Farrar J."/>
            <person name="Feltwell T."/>
            <person name="Hamlin N."/>
            <person name="Haque A."/>
            <person name="Hien T.T."/>
            <person name="Holroyd S."/>
            <person name="Jagels K."/>
            <person name="Krogh A."/>
            <person name="Larsen T.S."/>
            <person name="Leather S."/>
            <person name="Moule S."/>
            <person name="O'Gaora P."/>
            <person name="Parry C."/>
            <person name="Quail M.A."/>
            <person name="Rutherford K.M."/>
            <person name="Simmonds M."/>
            <person name="Skelton J."/>
            <person name="Stevens K."/>
            <person name="Whitehead S."/>
            <person name="Barrell B.G."/>
        </authorList>
    </citation>
    <scope>NUCLEOTIDE SEQUENCE [LARGE SCALE GENOMIC DNA]</scope>
    <source>
        <strain>CT18</strain>
    </source>
</reference>
<reference key="2">
    <citation type="journal article" date="2003" name="J. Bacteriol.">
        <title>Comparative genomics of Salmonella enterica serovar Typhi strains Ty2 and CT18.</title>
        <authorList>
            <person name="Deng W."/>
            <person name="Liou S.-R."/>
            <person name="Plunkett G. III"/>
            <person name="Mayhew G.F."/>
            <person name="Rose D.J."/>
            <person name="Burland V."/>
            <person name="Kodoyianni V."/>
            <person name="Schwartz D.C."/>
            <person name="Blattner F.R."/>
        </authorList>
    </citation>
    <scope>NUCLEOTIDE SEQUENCE [LARGE SCALE GENOMIC DNA]</scope>
    <source>
        <strain>ATCC 700931 / Ty2</strain>
    </source>
</reference>
<organism>
    <name type="scientific">Salmonella typhi</name>
    <dbReference type="NCBI Taxonomy" id="90370"/>
    <lineage>
        <taxon>Bacteria</taxon>
        <taxon>Pseudomonadati</taxon>
        <taxon>Pseudomonadota</taxon>
        <taxon>Gammaproteobacteria</taxon>
        <taxon>Enterobacterales</taxon>
        <taxon>Enterobacteriaceae</taxon>
        <taxon>Salmonella</taxon>
    </lineage>
</organism>
<protein>
    <recommendedName>
        <fullName evidence="1">Bifunctional protein GlmU</fullName>
    </recommendedName>
    <domain>
        <recommendedName>
            <fullName evidence="1">UDP-N-acetylglucosamine pyrophosphorylase</fullName>
            <ecNumber evidence="1">2.7.7.23</ecNumber>
        </recommendedName>
        <alternativeName>
            <fullName evidence="1">N-acetylglucosamine-1-phosphate uridyltransferase</fullName>
        </alternativeName>
    </domain>
    <domain>
        <recommendedName>
            <fullName evidence="1">Glucosamine-1-phosphate N-acetyltransferase</fullName>
            <ecNumber evidence="1">2.3.1.157</ecNumber>
        </recommendedName>
    </domain>
</protein>
<proteinExistence type="inferred from homology"/>